<sequence length="427" mass="45646">MLFSKISSAILLTAASFALTSARPVSKQSDADDKLLALPLTSVNRKYSQTKHGQQAAEKLGGIKAFAEGDGSVDTPGLYDFDLEEYAIPVSIGTPGQDFYLLFDTGSSDTWVPHKGCDNSEGCVGKRFFDPSSSSTFKETDYNLNITYGTGGANGIYFRDSITVGGATVKQQTLAYVDNVSGPTAEQSPDSELFLDGMFGAAYPDNTAMEAEYGDTYNTVHVNLYKQGLISSPVFSVYMNTNDGGGQVVFGGANNTLLGGDIQYTDVLKSRGGYFFWDAPVTGVKIDGADAVSFDGAQAFTIDTGTNFFIAPSSFAEKVVKAALPDATESQQGYTVPCSKYQDSKTTFSLVLQKSGSSSDTIDVSVPISKMLLPVDKSGETCMFIVLPDGGNQFIVGNLFLRFFVNVYDFGKNRIGFAPLASGYENN</sequence>
<comment type="function">
    <text>This enzyme, capable of clotting milk is frequently used for cheese production.</text>
</comment>
<comment type="catalytic activity">
    <reaction>
        <text>Hydrolysis of proteins, favoring hydrophobic residues at P1 and P1'. Clots milk. Does not accept Lys at P1, and hence does not activate trypsinogen.</text>
        <dbReference type="EC" id="3.4.23.23"/>
    </reaction>
</comment>
<comment type="similarity">
    <text evidence="3">Belongs to the peptidase A1 family.</text>
</comment>
<dbReference type="EC" id="3.4.23.23"/>
<dbReference type="EMBL" id="X06219">
    <property type="protein sequence ID" value="CAA29568.1"/>
    <property type="status" value="ALT_SEQ"/>
    <property type="molecule type" value="Genomic_DNA"/>
</dbReference>
<dbReference type="PIR" id="A25767">
    <property type="entry name" value="A25767"/>
</dbReference>
<dbReference type="PDB" id="1MPP">
    <property type="method" value="X-ray"/>
    <property type="resolution" value="2.00 A"/>
    <property type="chains" value="A=67-426"/>
</dbReference>
<dbReference type="PDBsum" id="1MPP"/>
<dbReference type="SMR" id="P09177"/>
<dbReference type="MEROPS" id="A01.013"/>
<dbReference type="KEGG" id="ag:CAA29568"/>
<dbReference type="EvolutionaryTrace" id="P09177"/>
<dbReference type="GO" id="GO:0004190">
    <property type="term" value="F:aspartic-type endopeptidase activity"/>
    <property type="evidence" value="ECO:0007669"/>
    <property type="project" value="UniProtKB-KW"/>
</dbReference>
<dbReference type="GO" id="GO:0006508">
    <property type="term" value="P:proteolysis"/>
    <property type="evidence" value="ECO:0007669"/>
    <property type="project" value="UniProtKB-KW"/>
</dbReference>
<dbReference type="CDD" id="cd05471">
    <property type="entry name" value="pepsin_like"/>
    <property type="match status" value="1"/>
</dbReference>
<dbReference type="FunFam" id="2.40.70.10:FF:000008">
    <property type="entry name" value="Cathepsin D"/>
    <property type="match status" value="1"/>
</dbReference>
<dbReference type="Gene3D" id="2.40.70.10">
    <property type="entry name" value="Acid Proteases"/>
    <property type="match status" value="2"/>
</dbReference>
<dbReference type="InterPro" id="IPR001461">
    <property type="entry name" value="Aspartic_peptidase_A1"/>
</dbReference>
<dbReference type="InterPro" id="IPR001969">
    <property type="entry name" value="Aspartic_peptidase_AS"/>
</dbReference>
<dbReference type="InterPro" id="IPR034164">
    <property type="entry name" value="Pepsin-like_dom"/>
</dbReference>
<dbReference type="InterPro" id="IPR033121">
    <property type="entry name" value="PEPTIDASE_A1"/>
</dbReference>
<dbReference type="InterPro" id="IPR021109">
    <property type="entry name" value="Peptidase_aspartic_dom_sf"/>
</dbReference>
<dbReference type="PANTHER" id="PTHR47966">
    <property type="entry name" value="BETA-SITE APP-CLEAVING ENZYME, ISOFORM A-RELATED"/>
    <property type="match status" value="1"/>
</dbReference>
<dbReference type="PANTHER" id="PTHR47966:SF51">
    <property type="entry name" value="BETA-SITE APP-CLEAVING ENZYME, ISOFORM A-RELATED"/>
    <property type="match status" value="1"/>
</dbReference>
<dbReference type="Pfam" id="PF00026">
    <property type="entry name" value="Asp"/>
    <property type="match status" value="1"/>
</dbReference>
<dbReference type="PRINTS" id="PR00792">
    <property type="entry name" value="PEPSIN"/>
</dbReference>
<dbReference type="SUPFAM" id="SSF50630">
    <property type="entry name" value="Acid proteases"/>
    <property type="match status" value="1"/>
</dbReference>
<dbReference type="PROSITE" id="PS00141">
    <property type="entry name" value="ASP_PROTEASE"/>
    <property type="match status" value="2"/>
</dbReference>
<dbReference type="PROSITE" id="PS51767">
    <property type="entry name" value="PEPTIDASE_A1"/>
    <property type="match status" value="1"/>
</dbReference>
<keyword id="KW-0002">3D-structure</keyword>
<keyword id="KW-0064">Aspartyl protease</keyword>
<keyword id="KW-0903">Direct protein sequencing</keyword>
<keyword id="KW-1015">Disulfide bond</keyword>
<keyword id="KW-0325">Glycoprotein</keyword>
<keyword id="KW-0378">Hydrolase</keyword>
<keyword id="KW-0645">Protease</keyword>
<keyword id="KW-0732">Signal</keyword>
<keyword id="KW-0865">Zymogen</keyword>
<protein>
    <recommendedName>
        <fullName>Mucorpepsin</fullName>
        <ecNumber>3.4.23.23</ecNumber>
    </recommendedName>
    <alternativeName>
        <fullName>Mucor rennin</fullName>
    </alternativeName>
</protein>
<organism>
    <name type="scientific">Rhizomucor pusillus</name>
    <dbReference type="NCBI Taxonomy" id="4840"/>
    <lineage>
        <taxon>Eukaryota</taxon>
        <taxon>Fungi</taxon>
        <taxon>Fungi incertae sedis</taxon>
        <taxon>Mucoromycota</taxon>
        <taxon>Mucoromycotina</taxon>
        <taxon>Mucoromycetes</taxon>
        <taxon>Mucorales</taxon>
        <taxon>Lichtheimiaceae</taxon>
        <taxon>Rhizomucor</taxon>
    </lineage>
</organism>
<feature type="signal peptide">
    <location>
        <begin position="1"/>
        <end position="22"/>
    </location>
</feature>
<feature type="propeptide" id="PRO_0000025895" description="Activation peptide" evidence="2">
    <location>
        <begin position="23"/>
        <end position="66"/>
    </location>
</feature>
<feature type="chain" id="PRO_0000025896" description="Mucorpepsin">
    <location>
        <begin position="67"/>
        <end position="427"/>
    </location>
</feature>
<feature type="domain" description="Peptidase A1" evidence="1">
    <location>
        <begin position="86"/>
        <end position="418"/>
    </location>
</feature>
<feature type="active site">
    <location>
        <position position="104"/>
    </location>
</feature>
<feature type="active site">
    <location>
        <position position="303"/>
    </location>
</feature>
<feature type="glycosylation site" description="N-linked (GlcNAc...) asparagine">
    <location>
        <position position="254"/>
    </location>
</feature>
<feature type="disulfide bond">
    <location>
        <begin position="117"/>
        <end position="123"/>
    </location>
</feature>
<feature type="disulfide bond">
    <location>
        <begin position="338"/>
        <end position="382"/>
    </location>
</feature>
<feature type="sequence conflict" description="In Ref. 2; AA sequence." evidence="3" ref="2">
    <original>N</original>
    <variation>D</variation>
    <location>
        <position position="427"/>
    </location>
</feature>
<feature type="strand" evidence="4">
    <location>
        <begin position="73"/>
        <end position="80"/>
    </location>
</feature>
<feature type="turn" evidence="4">
    <location>
        <begin position="81"/>
        <end position="84"/>
    </location>
</feature>
<feature type="strand" evidence="4">
    <location>
        <begin position="85"/>
        <end position="92"/>
    </location>
</feature>
<feature type="turn" evidence="4">
    <location>
        <begin position="93"/>
        <end position="96"/>
    </location>
</feature>
<feature type="strand" evidence="4">
    <location>
        <begin position="97"/>
        <end position="104"/>
    </location>
</feature>
<feature type="strand" evidence="4">
    <location>
        <begin position="111"/>
        <end position="114"/>
    </location>
</feature>
<feature type="helix" evidence="4">
    <location>
        <begin position="119"/>
        <end position="121"/>
    </location>
</feature>
<feature type="helix" evidence="4">
    <location>
        <begin position="131"/>
        <end position="133"/>
    </location>
</feature>
<feature type="strand" evidence="4">
    <location>
        <begin position="138"/>
        <end position="147"/>
    </location>
</feature>
<feature type="strand" evidence="4">
    <location>
        <begin position="152"/>
        <end position="164"/>
    </location>
</feature>
<feature type="strand" evidence="4">
    <location>
        <begin position="167"/>
        <end position="182"/>
    </location>
</feature>
<feature type="helix" evidence="4">
    <location>
        <begin position="183"/>
        <end position="185"/>
    </location>
</feature>
<feature type="strand" evidence="4">
    <location>
        <begin position="197"/>
        <end position="200"/>
    </location>
</feature>
<feature type="helix" evidence="4">
    <location>
        <begin position="204"/>
        <end position="206"/>
    </location>
</feature>
<feature type="helix" evidence="4">
    <location>
        <begin position="208"/>
        <end position="213"/>
    </location>
</feature>
<feature type="helix" evidence="4">
    <location>
        <begin position="220"/>
        <end position="226"/>
    </location>
</feature>
<feature type="strand" evidence="4">
    <location>
        <begin position="229"/>
        <end position="238"/>
    </location>
</feature>
<feature type="strand" evidence="4">
    <location>
        <begin position="242"/>
        <end position="252"/>
    </location>
</feature>
<feature type="helix" evidence="4">
    <location>
        <begin position="255"/>
        <end position="257"/>
    </location>
</feature>
<feature type="strand" evidence="4">
    <location>
        <begin position="258"/>
        <end position="260"/>
    </location>
</feature>
<feature type="strand" evidence="4">
    <location>
        <begin position="263"/>
        <end position="266"/>
    </location>
</feature>
<feature type="strand" evidence="4">
    <location>
        <begin position="268"/>
        <end position="270"/>
    </location>
</feature>
<feature type="strand" evidence="4">
    <location>
        <begin position="273"/>
        <end position="286"/>
    </location>
</feature>
<feature type="strand" evidence="4">
    <location>
        <begin position="289"/>
        <end position="303"/>
    </location>
</feature>
<feature type="strand" evidence="4">
    <location>
        <begin position="308"/>
        <end position="312"/>
    </location>
</feature>
<feature type="helix" evidence="4">
    <location>
        <begin position="313"/>
        <end position="323"/>
    </location>
</feature>
<feature type="strand" evidence="4">
    <location>
        <begin position="328"/>
        <end position="330"/>
    </location>
</feature>
<feature type="strand" evidence="4">
    <location>
        <begin position="333"/>
        <end position="337"/>
    </location>
</feature>
<feature type="helix" evidence="4">
    <location>
        <begin position="338"/>
        <end position="341"/>
    </location>
</feature>
<feature type="strand" evidence="4">
    <location>
        <begin position="347"/>
        <end position="353"/>
    </location>
</feature>
<feature type="strand" evidence="4">
    <location>
        <begin position="361"/>
        <end position="367"/>
    </location>
</feature>
<feature type="helix" evidence="4">
    <location>
        <begin position="368"/>
        <end position="371"/>
    </location>
</feature>
<feature type="strand" evidence="4">
    <location>
        <begin position="372"/>
        <end position="374"/>
    </location>
</feature>
<feature type="strand" evidence="4">
    <location>
        <begin position="376"/>
        <end position="379"/>
    </location>
</feature>
<feature type="strand" evidence="4">
    <location>
        <begin position="381"/>
        <end position="392"/>
    </location>
</feature>
<feature type="strand" evidence="4">
    <location>
        <begin position="395"/>
        <end position="397"/>
    </location>
</feature>
<feature type="helix" evidence="4">
    <location>
        <begin position="398"/>
        <end position="401"/>
    </location>
</feature>
<feature type="strand" evidence="4">
    <location>
        <begin position="404"/>
        <end position="409"/>
    </location>
</feature>
<feature type="turn" evidence="4">
    <location>
        <begin position="410"/>
        <end position="413"/>
    </location>
</feature>
<feature type="strand" evidence="4">
    <location>
        <begin position="414"/>
        <end position="420"/>
    </location>
</feature>
<feature type="turn" evidence="4">
    <location>
        <begin position="422"/>
        <end position="424"/>
    </location>
</feature>
<accession>P09177</accession>
<proteinExistence type="evidence at protein level"/>
<name>CARP_RHIPU</name>
<evidence type="ECO:0000255" key="1">
    <source>
        <dbReference type="PROSITE-ProRule" id="PRU01103"/>
    </source>
</evidence>
<evidence type="ECO:0000269" key="2">
    <source>
    </source>
</evidence>
<evidence type="ECO:0000305" key="3"/>
<evidence type="ECO:0007829" key="4">
    <source>
        <dbReference type="PDB" id="1MPP"/>
    </source>
</evidence>
<reference key="1">
    <citation type="journal article" date="1986" name="Nucleic Acids Res.">
        <title>Cloning and sequencing of a gene for Mucor rennin, an aspartate protease from Mucor pusillus.</title>
        <authorList>
            <person name="Tonouchi N."/>
            <person name="Shoun H."/>
            <person name="Uozumi T."/>
            <person name="Beppu T."/>
        </authorList>
    </citation>
    <scope>NUCLEOTIDE SEQUENCE [GENOMIC DNA]</scope>
    <scope>PARTIAL PROTEIN SEQUENCE</scope>
    <source>
        <strain>IFO 4578(+)</strain>
    </source>
</reference>
<reference key="2">
    <citation type="journal article" date="1988" name="FEBS Lett.">
        <title>Protein chemical characterization of Mucor pusillus aspartic proteinase. Amino acid sequence homology with the other aspartic proteinases, disulfide bond arrangement and site of carbohydrate attachment.</title>
        <authorList>
            <person name="Baudys M."/>
            <person name="Foundling S."/>
            <person name="Pavlik M."/>
            <person name="Blundell T.L."/>
            <person name="Kostka V."/>
        </authorList>
    </citation>
    <scope>PROTEIN SEQUENCE OF 67-427</scope>
</reference>
<reference key="3">
    <citation type="journal article" date="1989" name="J. Biol. Chem.">
        <title>Secretion by yeast of the zymogen form of Mucor rennin, an aspartic proteinase of Mucor pusillus, and its conversion to the mature form.</title>
        <authorList>
            <person name="Hiramatsu R."/>
            <person name="Aikawa J."/>
            <person name="Horinouchi S."/>
            <person name="Beppu T."/>
        </authorList>
    </citation>
    <scope>SEQUENCE REVISION TO 22</scope>
    <scope>PROTEOLYTIC PROCESSING</scope>
</reference>
<reference key="4">
    <citation type="journal article" date="1993" name="J. Mol. Biol.">
        <title>X-ray analyses of aspartic proteinases. V. Structure and refinement at 2.0-A resolution of the aspartic proteinase from Mucor pusillus.</title>
        <authorList>
            <person name="Newman M."/>
            <person name="Watson F."/>
            <person name="Roychowdhury P."/>
            <person name="Jones H."/>
            <person name="Badassi M."/>
            <person name="Cleasby A."/>
            <person name="Wood S.P."/>
            <person name="Tickle I.J."/>
            <person name="Blundell T.L."/>
        </authorList>
    </citation>
    <scope>X-RAY CRYSTALLOGRAPHY (2.0 ANGSTROMS)</scope>
</reference>